<organism>
    <name type="scientific">Clostridium botulinum (strain Loch Maree / Type A3)</name>
    <dbReference type="NCBI Taxonomy" id="498214"/>
    <lineage>
        <taxon>Bacteria</taxon>
        <taxon>Bacillati</taxon>
        <taxon>Bacillota</taxon>
        <taxon>Clostridia</taxon>
        <taxon>Eubacteriales</taxon>
        <taxon>Clostridiaceae</taxon>
        <taxon>Clostridium</taxon>
    </lineage>
</organism>
<evidence type="ECO:0000255" key="1">
    <source>
        <dbReference type="HAMAP-Rule" id="MF_00023"/>
    </source>
</evidence>
<keyword id="KW-0963">Cytoplasm</keyword>
<keyword id="KW-0694">RNA-binding</keyword>
<sequence>MSKKKGSNTLAENRKARHDYFIEETYEAGIELVGTEVKSIRQGKANLKDSYAEIRNGEVFVRNMHISPYEQGNIYNKDPLRDRKLLLHKSEIYKLVGFTTQQGYTLIPLSLYLKHGRVKVSLAVAKGKKNYDKRDAMLEKAAKREMDRQIKERSRY</sequence>
<feature type="chain" id="PRO_1000090142" description="SsrA-binding protein">
    <location>
        <begin position="1"/>
        <end position="156"/>
    </location>
</feature>
<protein>
    <recommendedName>
        <fullName evidence="1">SsrA-binding protein</fullName>
    </recommendedName>
    <alternativeName>
        <fullName evidence="1">Small protein B</fullName>
    </alternativeName>
</protein>
<dbReference type="EMBL" id="CP000962">
    <property type="protein sequence ID" value="ACA55125.1"/>
    <property type="molecule type" value="Genomic_DNA"/>
</dbReference>
<dbReference type="RefSeq" id="WP_003356515.1">
    <property type="nucleotide sequence ID" value="NC_010520.1"/>
</dbReference>
<dbReference type="SMR" id="B1KTK2"/>
<dbReference type="GeneID" id="5184489"/>
<dbReference type="KEGG" id="cbl:CLK_3416"/>
<dbReference type="HOGENOM" id="CLU_108953_0_0_9"/>
<dbReference type="GO" id="GO:0005829">
    <property type="term" value="C:cytosol"/>
    <property type="evidence" value="ECO:0007669"/>
    <property type="project" value="TreeGrafter"/>
</dbReference>
<dbReference type="GO" id="GO:0003723">
    <property type="term" value="F:RNA binding"/>
    <property type="evidence" value="ECO:0007669"/>
    <property type="project" value="UniProtKB-UniRule"/>
</dbReference>
<dbReference type="GO" id="GO:0070929">
    <property type="term" value="P:trans-translation"/>
    <property type="evidence" value="ECO:0007669"/>
    <property type="project" value="UniProtKB-UniRule"/>
</dbReference>
<dbReference type="CDD" id="cd09294">
    <property type="entry name" value="SmpB"/>
    <property type="match status" value="1"/>
</dbReference>
<dbReference type="Gene3D" id="2.40.280.10">
    <property type="match status" value="1"/>
</dbReference>
<dbReference type="HAMAP" id="MF_00023">
    <property type="entry name" value="SmpB"/>
    <property type="match status" value="1"/>
</dbReference>
<dbReference type="InterPro" id="IPR023620">
    <property type="entry name" value="SmpB"/>
</dbReference>
<dbReference type="InterPro" id="IPR000037">
    <property type="entry name" value="SsrA-bd_prot"/>
</dbReference>
<dbReference type="InterPro" id="IPR020081">
    <property type="entry name" value="SsrA-bd_prot_CS"/>
</dbReference>
<dbReference type="NCBIfam" id="NF003843">
    <property type="entry name" value="PRK05422.1"/>
    <property type="match status" value="1"/>
</dbReference>
<dbReference type="NCBIfam" id="TIGR00086">
    <property type="entry name" value="smpB"/>
    <property type="match status" value="1"/>
</dbReference>
<dbReference type="PANTHER" id="PTHR30308:SF2">
    <property type="entry name" value="SSRA-BINDING PROTEIN"/>
    <property type="match status" value="1"/>
</dbReference>
<dbReference type="PANTHER" id="PTHR30308">
    <property type="entry name" value="TMRNA-BINDING COMPONENT OF TRANS-TRANSLATION TAGGING COMPLEX"/>
    <property type="match status" value="1"/>
</dbReference>
<dbReference type="Pfam" id="PF01668">
    <property type="entry name" value="SmpB"/>
    <property type="match status" value="1"/>
</dbReference>
<dbReference type="SUPFAM" id="SSF74982">
    <property type="entry name" value="Small protein B (SmpB)"/>
    <property type="match status" value="1"/>
</dbReference>
<dbReference type="PROSITE" id="PS01317">
    <property type="entry name" value="SSRP"/>
    <property type="match status" value="1"/>
</dbReference>
<accession>B1KTK2</accession>
<comment type="function">
    <text evidence="1">Required for rescue of stalled ribosomes mediated by trans-translation. Binds to transfer-messenger RNA (tmRNA), required for stable association of tmRNA with ribosomes. tmRNA and SmpB together mimic tRNA shape, replacing the anticodon stem-loop with SmpB. tmRNA is encoded by the ssrA gene; the 2 termini fold to resemble tRNA(Ala) and it encodes a 'tag peptide', a short internal open reading frame. During trans-translation Ala-aminoacylated tmRNA acts like a tRNA, entering the A-site of stalled ribosomes, displacing the stalled mRNA. The ribosome then switches to translate the ORF on the tmRNA; the nascent peptide is terminated with the 'tag peptide' encoded by the tmRNA and targeted for degradation. The ribosome is freed to recommence translation, which seems to be the essential function of trans-translation.</text>
</comment>
<comment type="subcellular location">
    <subcellularLocation>
        <location evidence="1">Cytoplasm</location>
    </subcellularLocation>
    <text evidence="1">The tmRNA-SmpB complex associates with stalled 70S ribosomes.</text>
</comment>
<comment type="similarity">
    <text evidence="1">Belongs to the SmpB family.</text>
</comment>
<name>SSRP_CLOBM</name>
<gene>
    <name evidence="1" type="primary">smpB</name>
    <name type="ordered locus">CLK_3416</name>
</gene>
<proteinExistence type="inferred from homology"/>
<reference key="1">
    <citation type="journal article" date="2007" name="PLoS ONE">
        <title>Analysis of the neurotoxin complex genes in Clostridium botulinum A1-A4 and B1 strains: BoNT/A3, /Ba4 and /B1 clusters are located within plasmids.</title>
        <authorList>
            <person name="Smith T.J."/>
            <person name="Hill K.K."/>
            <person name="Foley B.T."/>
            <person name="Detter J.C."/>
            <person name="Munk A.C."/>
            <person name="Bruce D.C."/>
            <person name="Doggett N.A."/>
            <person name="Smith L.A."/>
            <person name="Marks J.D."/>
            <person name="Xie G."/>
            <person name="Brettin T.S."/>
        </authorList>
    </citation>
    <scope>NUCLEOTIDE SEQUENCE [LARGE SCALE GENOMIC DNA]</scope>
    <source>
        <strain>Loch Maree / Type A3</strain>
    </source>
</reference>